<comment type="similarity">
    <text evidence="1">Belongs to the UPF0371 family.</text>
</comment>
<dbReference type="EMBL" id="FM204884">
    <property type="protein sequence ID" value="CAW98761.1"/>
    <property type="molecule type" value="Genomic_DNA"/>
</dbReference>
<dbReference type="SMR" id="C0MDA9"/>
<dbReference type="KEGG" id="seq:SZO_06760"/>
<dbReference type="eggNOG" id="COG4868">
    <property type="taxonomic scope" value="Bacteria"/>
</dbReference>
<dbReference type="HOGENOM" id="CLU_046981_0_0_9"/>
<dbReference type="Proteomes" id="UP000001368">
    <property type="component" value="Chromosome"/>
</dbReference>
<dbReference type="Gene3D" id="1.20.1570.10">
    <property type="entry name" value="dip2346 domain like"/>
    <property type="match status" value="1"/>
</dbReference>
<dbReference type="Gene3D" id="3.10.630.10">
    <property type="entry name" value="dip2346 domain like"/>
    <property type="match status" value="1"/>
</dbReference>
<dbReference type="Gene3D" id="3.40.140.40">
    <property type="entry name" value="Domain of unknown function (DUF1846), C-terminal subdomain"/>
    <property type="match status" value="1"/>
</dbReference>
<dbReference type="HAMAP" id="MF_01567">
    <property type="entry name" value="UPF0371"/>
    <property type="match status" value="1"/>
</dbReference>
<dbReference type="InterPro" id="IPR014999">
    <property type="entry name" value="DUF1846"/>
</dbReference>
<dbReference type="InterPro" id="IPR048441">
    <property type="entry name" value="DUF1846_C"/>
</dbReference>
<dbReference type="InterPro" id="IPR048496">
    <property type="entry name" value="DUF1846_N"/>
</dbReference>
<dbReference type="NCBIfam" id="NF010184">
    <property type="entry name" value="PRK13663.1"/>
    <property type="match status" value="1"/>
</dbReference>
<dbReference type="Pfam" id="PF08903">
    <property type="entry name" value="DUF1846"/>
    <property type="match status" value="1"/>
</dbReference>
<dbReference type="Pfam" id="PF20921">
    <property type="entry name" value="DUF1846_C"/>
    <property type="match status" value="1"/>
</dbReference>
<dbReference type="PIRSF" id="PIRSF033132">
    <property type="entry name" value="DUF1846"/>
    <property type="match status" value="1"/>
</dbReference>
<gene>
    <name type="ordered locus">SZO_06760</name>
</gene>
<organism>
    <name type="scientific">Streptococcus equi subsp. zooepidemicus (strain H70)</name>
    <dbReference type="NCBI Taxonomy" id="553483"/>
    <lineage>
        <taxon>Bacteria</taxon>
        <taxon>Bacillati</taxon>
        <taxon>Bacillota</taxon>
        <taxon>Bacilli</taxon>
        <taxon>Lactobacillales</taxon>
        <taxon>Streptococcaceae</taxon>
        <taxon>Streptococcus</taxon>
    </lineage>
</organism>
<evidence type="ECO:0000255" key="1">
    <source>
        <dbReference type="HAMAP-Rule" id="MF_01567"/>
    </source>
</evidence>
<sequence length="500" mass="55978">MKNIAFDSNKYLSLQRNHILERIKQFDGKLYMEFGGKMLEDFHAARVLPGYEPDNKIKLLKELKDQVEIVITINANNIEHSKTRGDLGISYDQEVLRLIDTFNALDIYVGSVVITQYNHQAAADHFQKQLAKNGITSYRHYPIKGYPTDINHIISPDGMGRNDYIKTSRNLIVVTAPGPGSGKLATCISQLYHDQLNGITSGYAKFETFPVWNLPLHHPVNLAYEAATADLDDVNMIDPFHLEAYGKTAVNYNRDIEVFPVLNRTFERILSQSPYASPTDMGVNMVGFSIVNEEAAIEASKQEIIRRYYQTLVDFKAERVTETAVKKLELLMNDIGVTPKDRQVTLIARQKAELTGQPALALQLPNGQVVTGKTSDLFGPTAAVIINAIKTLAHISKETHLIEPEYVKPIQGLKINHLGSHNPRLHANEILMALAITAMNNNQADLAMKELGNLKGSEAHSTVILTNEDKHALRQLGINVTFDPVYQHHKLYRSQSQTSS</sequence>
<proteinExistence type="inferred from homology"/>
<feature type="chain" id="PRO_1000215520" description="UPF0371 protein SZO_06760">
    <location>
        <begin position="1"/>
        <end position="500"/>
    </location>
</feature>
<reference key="1">
    <citation type="journal article" date="2009" name="PLoS Pathog.">
        <title>Genomic evidence for the evolution of Streptococcus equi: host restriction, increased virulence, and genetic exchange with human pathogens.</title>
        <authorList>
            <person name="Holden M.T.G."/>
            <person name="Heather Z."/>
            <person name="Paillot R."/>
            <person name="Steward K.F."/>
            <person name="Webb K."/>
            <person name="Ainslie F."/>
            <person name="Jourdan T."/>
            <person name="Bason N.C."/>
            <person name="Holroyd N.E."/>
            <person name="Mungall K."/>
            <person name="Quail M.A."/>
            <person name="Sanders M."/>
            <person name="Simmonds M."/>
            <person name="Willey D."/>
            <person name="Brooks K."/>
            <person name="Aanensen D.M."/>
            <person name="Spratt B.G."/>
            <person name="Jolley K.A."/>
            <person name="Maiden M.C.J."/>
            <person name="Kehoe M."/>
            <person name="Chanter N."/>
            <person name="Bentley S.D."/>
            <person name="Robinson C."/>
            <person name="Maskell D.J."/>
            <person name="Parkhill J."/>
            <person name="Waller A.S."/>
        </authorList>
    </citation>
    <scope>NUCLEOTIDE SEQUENCE [LARGE SCALE GENOMIC DNA]</scope>
    <source>
        <strain>H70</strain>
    </source>
</reference>
<protein>
    <recommendedName>
        <fullName evidence="1">UPF0371 protein SZO_06760</fullName>
    </recommendedName>
</protein>
<name>Y676_STRS7</name>
<accession>C0MDA9</accession>